<gene>
    <name evidence="1" type="primary">surE</name>
    <name type="ordered locus">Mnod_7398</name>
</gene>
<evidence type="ECO:0000255" key="1">
    <source>
        <dbReference type="HAMAP-Rule" id="MF_00060"/>
    </source>
</evidence>
<comment type="function">
    <text evidence="1">Nucleotidase that shows phosphatase activity on nucleoside 5'-monophosphates.</text>
</comment>
<comment type="catalytic activity">
    <reaction evidence="1">
        <text>a ribonucleoside 5'-phosphate + H2O = a ribonucleoside + phosphate</text>
        <dbReference type="Rhea" id="RHEA:12484"/>
        <dbReference type="ChEBI" id="CHEBI:15377"/>
        <dbReference type="ChEBI" id="CHEBI:18254"/>
        <dbReference type="ChEBI" id="CHEBI:43474"/>
        <dbReference type="ChEBI" id="CHEBI:58043"/>
        <dbReference type="EC" id="3.1.3.5"/>
    </reaction>
</comment>
<comment type="cofactor">
    <cofactor evidence="1">
        <name>a divalent metal cation</name>
        <dbReference type="ChEBI" id="CHEBI:60240"/>
    </cofactor>
    <text evidence="1">Binds 1 divalent metal cation per subunit.</text>
</comment>
<comment type="subcellular location">
    <subcellularLocation>
        <location evidence="1">Cytoplasm</location>
    </subcellularLocation>
</comment>
<comment type="similarity">
    <text evidence="1">Belongs to the SurE nucleotidase family.</text>
</comment>
<organism>
    <name type="scientific">Methylobacterium nodulans (strain LMG 21967 / CNCM I-2342 / ORS 2060)</name>
    <dbReference type="NCBI Taxonomy" id="460265"/>
    <lineage>
        <taxon>Bacteria</taxon>
        <taxon>Pseudomonadati</taxon>
        <taxon>Pseudomonadota</taxon>
        <taxon>Alphaproteobacteria</taxon>
        <taxon>Hyphomicrobiales</taxon>
        <taxon>Methylobacteriaceae</taxon>
        <taxon>Methylobacterium</taxon>
    </lineage>
</organism>
<accession>B8IN19</accession>
<keyword id="KW-0963">Cytoplasm</keyword>
<keyword id="KW-0378">Hydrolase</keyword>
<keyword id="KW-0479">Metal-binding</keyword>
<keyword id="KW-0547">Nucleotide-binding</keyword>
<keyword id="KW-1185">Reference proteome</keyword>
<feature type="chain" id="PRO_1000196609" description="5'-nucleotidase SurE">
    <location>
        <begin position="1"/>
        <end position="253"/>
    </location>
</feature>
<feature type="binding site" evidence="1">
    <location>
        <position position="8"/>
    </location>
    <ligand>
        <name>a divalent metal cation</name>
        <dbReference type="ChEBI" id="CHEBI:60240"/>
    </ligand>
</feature>
<feature type="binding site" evidence="1">
    <location>
        <position position="9"/>
    </location>
    <ligand>
        <name>a divalent metal cation</name>
        <dbReference type="ChEBI" id="CHEBI:60240"/>
    </ligand>
</feature>
<feature type="binding site" evidence="1">
    <location>
        <position position="40"/>
    </location>
    <ligand>
        <name>a divalent metal cation</name>
        <dbReference type="ChEBI" id="CHEBI:60240"/>
    </ligand>
</feature>
<feature type="binding site" evidence="1">
    <location>
        <position position="93"/>
    </location>
    <ligand>
        <name>a divalent metal cation</name>
        <dbReference type="ChEBI" id="CHEBI:60240"/>
    </ligand>
</feature>
<name>SURE_METNO</name>
<proteinExistence type="inferred from homology"/>
<reference key="1">
    <citation type="submission" date="2009-01" db="EMBL/GenBank/DDBJ databases">
        <title>Complete sequence of chromosome of Methylobacterium nodulans ORS 2060.</title>
        <authorList>
            <consortium name="US DOE Joint Genome Institute"/>
            <person name="Lucas S."/>
            <person name="Copeland A."/>
            <person name="Lapidus A."/>
            <person name="Glavina del Rio T."/>
            <person name="Dalin E."/>
            <person name="Tice H."/>
            <person name="Bruce D."/>
            <person name="Goodwin L."/>
            <person name="Pitluck S."/>
            <person name="Sims D."/>
            <person name="Brettin T."/>
            <person name="Detter J.C."/>
            <person name="Han C."/>
            <person name="Larimer F."/>
            <person name="Land M."/>
            <person name="Hauser L."/>
            <person name="Kyrpides N."/>
            <person name="Ivanova N."/>
            <person name="Marx C.J."/>
            <person name="Richardson P."/>
        </authorList>
    </citation>
    <scope>NUCLEOTIDE SEQUENCE [LARGE SCALE GENOMIC DNA]</scope>
    <source>
        <strain>LMG 21967 / CNCM I-2342 / ORS 2060</strain>
    </source>
</reference>
<sequence length="253" mass="27405">MRILVTNDDGIHAPGLKVLEEIARELSDDVWVVAPETDQSGVSHSLSLNDPLRLRRVAETRFAVKGTPSDCVIMGVRHILKERGPDLVLSGVNRGQNVAEDVTYSGTVAGAMEGTILGVRSIALSQAYGVGGRANVKWHTAAEHGARTIRRILEAGIEPGILVNVNFPDCEPEAVEGIAVVAQGMRNQQLLAIDERLDGRGNPYFWLAFAKARFEPGHGTDLKAIAENRIAVTPLRLDLTDEPTLTRFAQVFG</sequence>
<protein>
    <recommendedName>
        <fullName evidence="1">5'-nucleotidase SurE</fullName>
        <ecNumber evidence="1">3.1.3.5</ecNumber>
    </recommendedName>
    <alternativeName>
        <fullName evidence="1">Nucleoside 5'-monophosphate phosphohydrolase</fullName>
    </alternativeName>
</protein>
<dbReference type="EC" id="3.1.3.5" evidence="1"/>
<dbReference type="EMBL" id="CP001349">
    <property type="protein sequence ID" value="ACL62135.1"/>
    <property type="molecule type" value="Genomic_DNA"/>
</dbReference>
<dbReference type="RefSeq" id="WP_015933693.1">
    <property type="nucleotide sequence ID" value="NC_011894.1"/>
</dbReference>
<dbReference type="SMR" id="B8IN19"/>
<dbReference type="STRING" id="460265.Mnod_7398"/>
<dbReference type="KEGG" id="mno:Mnod_7398"/>
<dbReference type="eggNOG" id="COG0496">
    <property type="taxonomic scope" value="Bacteria"/>
</dbReference>
<dbReference type="HOGENOM" id="CLU_045192_1_2_5"/>
<dbReference type="OrthoDB" id="9780815at2"/>
<dbReference type="Proteomes" id="UP000008207">
    <property type="component" value="Chromosome"/>
</dbReference>
<dbReference type="GO" id="GO:0005737">
    <property type="term" value="C:cytoplasm"/>
    <property type="evidence" value="ECO:0007669"/>
    <property type="project" value="UniProtKB-SubCell"/>
</dbReference>
<dbReference type="GO" id="GO:0008254">
    <property type="term" value="F:3'-nucleotidase activity"/>
    <property type="evidence" value="ECO:0007669"/>
    <property type="project" value="TreeGrafter"/>
</dbReference>
<dbReference type="GO" id="GO:0008253">
    <property type="term" value="F:5'-nucleotidase activity"/>
    <property type="evidence" value="ECO:0007669"/>
    <property type="project" value="UniProtKB-UniRule"/>
</dbReference>
<dbReference type="GO" id="GO:0004309">
    <property type="term" value="F:exopolyphosphatase activity"/>
    <property type="evidence" value="ECO:0007669"/>
    <property type="project" value="TreeGrafter"/>
</dbReference>
<dbReference type="GO" id="GO:0046872">
    <property type="term" value="F:metal ion binding"/>
    <property type="evidence" value="ECO:0007669"/>
    <property type="project" value="UniProtKB-UniRule"/>
</dbReference>
<dbReference type="GO" id="GO:0000166">
    <property type="term" value="F:nucleotide binding"/>
    <property type="evidence" value="ECO:0007669"/>
    <property type="project" value="UniProtKB-KW"/>
</dbReference>
<dbReference type="FunFam" id="3.40.1210.10:FF:000001">
    <property type="entry name" value="5'/3'-nucleotidase SurE"/>
    <property type="match status" value="1"/>
</dbReference>
<dbReference type="Gene3D" id="3.40.1210.10">
    <property type="entry name" value="Survival protein SurE-like phosphatase/nucleotidase"/>
    <property type="match status" value="1"/>
</dbReference>
<dbReference type="HAMAP" id="MF_00060">
    <property type="entry name" value="SurE"/>
    <property type="match status" value="1"/>
</dbReference>
<dbReference type="InterPro" id="IPR030048">
    <property type="entry name" value="SurE"/>
</dbReference>
<dbReference type="InterPro" id="IPR002828">
    <property type="entry name" value="SurE-like_Pase/nucleotidase"/>
</dbReference>
<dbReference type="InterPro" id="IPR036523">
    <property type="entry name" value="SurE-like_sf"/>
</dbReference>
<dbReference type="NCBIfam" id="NF001490">
    <property type="entry name" value="PRK00346.1-4"/>
    <property type="match status" value="1"/>
</dbReference>
<dbReference type="NCBIfam" id="TIGR00087">
    <property type="entry name" value="surE"/>
    <property type="match status" value="1"/>
</dbReference>
<dbReference type="PANTHER" id="PTHR30457">
    <property type="entry name" value="5'-NUCLEOTIDASE SURE"/>
    <property type="match status" value="1"/>
</dbReference>
<dbReference type="PANTHER" id="PTHR30457:SF12">
    <property type="entry name" value="5'_3'-NUCLEOTIDASE SURE"/>
    <property type="match status" value="1"/>
</dbReference>
<dbReference type="Pfam" id="PF01975">
    <property type="entry name" value="SurE"/>
    <property type="match status" value="1"/>
</dbReference>
<dbReference type="SUPFAM" id="SSF64167">
    <property type="entry name" value="SurE-like"/>
    <property type="match status" value="1"/>
</dbReference>